<dbReference type="EMBL" id="CP000359">
    <property type="protein sequence ID" value="ABF44947.1"/>
    <property type="molecule type" value="Genomic_DNA"/>
</dbReference>
<dbReference type="RefSeq" id="WP_011529788.1">
    <property type="nucleotide sequence ID" value="NC_008025.1"/>
</dbReference>
<dbReference type="SMR" id="Q1J0N7"/>
<dbReference type="STRING" id="319795.Dgeo_0645"/>
<dbReference type="KEGG" id="dge:Dgeo_0645"/>
<dbReference type="eggNOG" id="COG0267">
    <property type="taxonomic scope" value="Bacteria"/>
</dbReference>
<dbReference type="HOGENOM" id="CLU_190949_1_1_0"/>
<dbReference type="Proteomes" id="UP000002431">
    <property type="component" value="Chromosome"/>
</dbReference>
<dbReference type="GO" id="GO:0022625">
    <property type="term" value="C:cytosolic large ribosomal subunit"/>
    <property type="evidence" value="ECO:0007669"/>
    <property type="project" value="TreeGrafter"/>
</dbReference>
<dbReference type="GO" id="GO:0003735">
    <property type="term" value="F:structural constituent of ribosome"/>
    <property type="evidence" value="ECO:0007669"/>
    <property type="project" value="InterPro"/>
</dbReference>
<dbReference type="GO" id="GO:0006412">
    <property type="term" value="P:translation"/>
    <property type="evidence" value="ECO:0007669"/>
    <property type="project" value="UniProtKB-UniRule"/>
</dbReference>
<dbReference type="FunFam" id="2.20.28.120:FF:000007">
    <property type="entry name" value="50S ribosomal protein L33"/>
    <property type="match status" value="1"/>
</dbReference>
<dbReference type="Gene3D" id="2.20.28.120">
    <property type="entry name" value="Ribosomal protein L33"/>
    <property type="match status" value="1"/>
</dbReference>
<dbReference type="HAMAP" id="MF_00294">
    <property type="entry name" value="Ribosomal_bL33"/>
    <property type="match status" value="1"/>
</dbReference>
<dbReference type="InterPro" id="IPR001705">
    <property type="entry name" value="Ribosomal_bL33"/>
</dbReference>
<dbReference type="InterPro" id="IPR018264">
    <property type="entry name" value="Ribosomal_bL33_CS"/>
</dbReference>
<dbReference type="InterPro" id="IPR038584">
    <property type="entry name" value="Ribosomal_bL33_sf"/>
</dbReference>
<dbReference type="InterPro" id="IPR011332">
    <property type="entry name" value="Ribosomal_zn-bd"/>
</dbReference>
<dbReference type="NCBIfam" id="NF001860">
    <property type="entry name" value="PRK00595.1"/>
    <property type="match status" value="1"/>
</dbReference>
<dbReference type="NCBIfam" id="TIGR01023">
    <property type="entry name" value="rpmG_bact"/>
    <property type="match status" value="1"/>
</dbReference>
<dbReference type="PANTHER" id="PTHR15238">
    <property type="entry name" value="54S RIBOSOMAL PROTEIN L39, MITOCHONDRIAL"/>
    <property type="match status" value="1"/>
</dbReference>
<dbReference type="PANTHER" id="PTHR15238:SF1">
    <property type="entry name" value="LARGE RIBOSOMAL SUBUNIT PROTEIN BL33M"/>
    <property type="match status" value="1"/>
</dbReference>
<dbReference type="Pfam" id="PF00471">
    <property type="entry name" value="Ribosomal_L33"/>
    <property type="match status" value="1"/>
</dbReference>
<dbReference type="SUPFAM" id="SSF57829">
    <property type="entry name" value="Zn-binding ribosomal proteins"/>
    <property type="match status" value="1"/>
</dbReference>
<dbReference type="PROSITE" id="PS00582">
    <property type="entry name" value="RIBOSOMAL_L33"/>
    <property type="match status" value="1"/>
</dbReference>
<comment type="similarity">
    <text evidence="1">Belongs to the bacterial ribosomal protein bL33 family.</text>
</comment>
<evidence type="ECO:0000255" key="1">
    <source>
        <dbReference type="HAMAP-Rule" id="MF_00294"/>
    </source>
</evidence>
<evidence type="ECO:0000305" key="2"/>
<reference key="1">
    <citation type="submission" date="2006-04" db="EMBL/GenBank/DDBJ databases">
        <title>Complete sequence of chromosome of Deinococcus geothermalis DSM 11300.</title>
        <authorList>
            <person name="Copeland A."/>
            <person name="Lucas S."/>
            <person name="Lapidus A."/>
            <person name="Barry K."/>
            <person name="Detter J.C."/>
            <person name="Glavina del Rio T."/>
            <person name="Hammon N."/>
            <person name="Israni S."/>
            <person name="Dalin E."/>
            <person name="Tice H."/>
            <person name="Pitluck S."/>
            <person name="Brettin T."/>
            <person name="Bruce D."/>
            <person name="Han C."/>
            <person name="Tapia R."/>
            <person name="Saunders E."/>
            <person name="Gilna P."/>
            <person name="Schmutz J."/>
            <person name="Larimer F."/>
            <person name="Land M."/>
            <person name="Hauser L."/>
            <person name="Kyrpides N."/>
            <person name="Kim E."/>
            <person name="Daly M.J."/>
            <person name="Fredrickson J.K."/>
            <person name="Makarova K.S."/>
            <person name="Gaidamakova E.K."/>
            <person name="Zhai M."/>
            <person name="Richardson P."/>
        </authorList>
    </citation>
    <scope>NUCLEOTIDE SEQUENCE [LARGE SCALE GENOMIC DNA]</scope>
    <source>
        <strain>DSM 11300 / CIP 105573 / AG-3a</strain>
    </source>
</reference>
<organism>
    <name type="scientific">Deinococcus geothermalis (strain DSM 11300 / CIP 105573 / AG-3a)</name>
    <dbReference type="NCBI Taxonomy" id="319795"/>
    <lineage>
        <taxon>Bacteria</taxon>
        <taxon>Thermotogati</taxon>
        <taxon>Deinococcota</taxon>
        <taxon>Deinococci</taxon>
        <taxon>Deinococcales</taxon>
        <taxon>Deinococcaceae</taxon>
        <taxon>Deinococcus</taxon>
    </lineage>
</organism>
<name>RL33_DEIGD</name>
<accession>Q1J0N7</accession>
<sequence>MAKEGPRIIVKMESTAGTGFYYTTTKNRRNTQAKLELRKYDPVAKKHVVFKEKKV</sequence>
<keyword id="KW-0687">Ribonucleoprotein</keyword>
<keyword id="KW-0689">Ribosomal protein</keyword>
<feature type="chain" id="PRO_1000004163" description="Large ribosomal subunit protein bL33">
    <location>
        <begin position="1"/>
        <end position="55"/>
    </location>
</feature>
<protein>
    <recommendedName>
        <fullName evidence="1">Large ribosomal subunit protein bL33</fullName>
    </recommendedName>
    <alternativeName>
        <fullName evidence="2">50S ribosomal protein L33</fullName>
    </alternativeName>
</protein>
<gene>
    <name evidence="1" type="primary">rpmG</name>
    <name type="ordered locus">Dgeo_0645</name>
</gene>
<proteinExistence type="inferred from homology"/>